<reference key="1">
    <citation type="journal article" date="2004" name="Nucleic Acids Res.">
        <title>The genome sequence of Bacillus cereus ATCC 10987 reveals metabolic adaptations and a large plasmid related to Bacillus anthracis pXO1.</title>
        <authorList>
            <person name="Rasko D.A."/>
            <person name="Ravel J."/>
            <person name="Oekstad O.A."/>
            <person name="Helgason E."/>
            <person name="Cer R.Z."/>
            <person name="Jiang L."/>
            <person name="Shores K.A."/>
            <person name="Fouts D.E."/>
            <person name="Tourasse N.J."/>
            <person name="Angiuoli S.V."/>
            <person name="Kolonay J.F."/>
            <person name="Nelson W.C."/>
            <person name="Kolstoe A.-B."/>
            <person name="Fraser C.M."/>
            <person name="Read T.D."/>
        </authorList>
    </citation>
    <scope>NUCLEOTIDE SEQUENCE [LARGE SCALE GENOMIC DNA]</scope>
    <source>
        <strain>ATCC 10987 / NRS 248</strain>
    </source>
</reference>
<accession>Q731B3</accession>
<evidence type="ECO:0000255" key="1">
    <source>
        <dbReference type="HAMAP-Rule" id="MF_00378"/>
    </source>
</evidence>
<proteinExistence type="inferred from homology"/>
<protein>
    <recommendedName>
        <fullName evidence="1">Exodeoxyribonuclease 7 large subunit</fullName>
        <ecNumber evidence="1">3.1.11.6</ecNumber>
    </recommendedName>
    <alternativeName>
        <fullName evidence="1">Exodeoxyribonuclease VII large subunit</fullName>
        <shortName evidence="1">Exonuclease VII large subunit</shortName>
    </alternativeName>
</protein>
<sequence>MEKQYLTVTALTRYIKTKIEYDPHLQSVWLKGEISNFKNHSRGHMYFTLKDENARIAAVMFAGHNRNIKFRPENGMKVLVKGKISVYEASGSYQIYIQDMQPDGVGNLHLAYEQLKVRLEEEGLFSQVYKKTIPPYAKTIGVITSPTGAAIRDIITTIKRRYPIGNVIVFPVLVQGESAAPSIVQAIRTANEMEGIDVLIVGRGGGSIEELWAFNEEMVARAIFKSEIPIISAVGHETDFTIADFVADLRAPTPTAAAELAAPNIIELQEKVLQRTLRLQRAMRELVHKKEEKLQVLQKSYAFRYPRQVYEQKEEQLDRALEQLVLAKERYIDKKVNQLKQLSFYLEKHHPSQKIMQTKVAVETLQKQLQREMQTLLQTKEFAFVRAAQKLEALSPLKVMMRGYGLVYDEEKQVLKSVKDVSLGDAVSVQLQDGILDCSVSGIEERELNNGK</sequence>
<gene>
    <name evidence="1" type="primary">xseA</name>
    <name type="ordered locus">BCE_4253</name>
</gene>
<keyword id="KW-0963">Cytoplasm</keyword>
<keyword id="KW-0269">Exonuclease</keyword>
<keyword id="KW-0378">Hydrolase</keyword>
<keyword id="KW-0540">Nuclease</keyword>
<name>EX7L_BACC1</name>
<organism>
    <name type="scientific">Bacillus cereus (strain ATCC 10987 / NRS 248)</name>
    <dbReference type="NCBI Taxonomy" id="222523"/>
    <lineage>
        <taxon>Bacteria</taxon>
        <taxon>Bacillati</taxon>
        <taxon>Bacillota</taxon>
        <taxon>Bacilli</taxon>
        <taxon>Bacillales</taxon>
        <taxon>Bacillaceae</taxon>
        <taxon>Bacillus</taxon>
        <taxon>Bacillus cereus group</taxon>
    </lineage>
</organism>
<comment type="function">
    <text evidence="1">Bidirectionally degrades single-stranded DNA into large acid-insoluble oligonucleotides, which are then degraded further into small acid-soluble oligonucleotides.</text>
</comment>
<comment type="catalytic activity">
    <reaction evidence="1">
        <text>Exonucleolytic cleavage in either 5'- to 3'- or 3'- to 5'-direction to yield nucleoside 5'-phosphates.</text>
        <dbReference type="EC" id="3.1.11.6"/>
    </reaction>
</comment>
<comment type="subunit">
    <text evidence="1">Heterooligomer composed of large and small subunits.</text>
</comment>
<comment type="subcellular location">
    <subcellularLocation>
        <location evidence="1">Cytoplasm</location>
    </subcellularLocation>
</comment>
<comment type="similarity">
    <text evidence="1">Belongs to the XseA family.</text>
</comment>
<dbReference type="EC" id="3.1.11.6" evidence="1"/>
<dbReference type="EMBL" id="AE017194">
    <property type="protein sequence ID" value="AAS43154.1"/>
    <property type="molecule type" value="Genomic_DNA"/>
</dbReference>
<dbReference type="SMR" id="Q731B3"/>
<dbReference type="KEGG" id="bca:BCE_4253"/>
<dbReference type="HOGENOM" id="CLU_023625_3_1_9"/>
<dbReference type="Proteomes" id="UP000002527">
    <property type="component" value="Chromosome"/>
</dbReference>
<dbReference type="GO" id="GO:0005737">
    <property type="term" value="C:cytoplasm"/>
    <property type="evidence" value="ECO:0007669"/>
    <property type="project" value="UniProtKB-SubCell"/>
</dbReference>
<dbReference type="GO" id="GO:0009318">
    <property type="term" value="C:exodeoxyribonuclease VII complex"/>
    <property type="evidence" value="ECO:0007669"/>
    <property type="project" value="InterPro"/>
</dbReference>
<dbReference type="GO" id="GO:0008855">
    <property type="term" value="F:exodeoxyribonuclease VII activity"/>
    <property type="evidence" value="ECO:0007669"/>
    <property type="project" value="UniProtKB-UniRule"/>
</dbReference>
<dbReference type="GO" id="GO:0003676">
    <property type="term" value="F:nucleic acid binding"/>
    <property type="evidence" value="ECO:0007669"/>
    <property type="project" value="InterPro"/>
</dbReference>
<dbReference type="GO" id="GO:0006308">
    <property type="term" value="P:DNA catabolic process"/>
    <property type="evidence" value="ECO:0007669"/>
    <property type="project" value="UniProtKB-UniRule"/>
</dbReference>
<dbReference type="CDD" id="cd04489">
    <property type="entry name" value="ExoVII_LU_OBF"/>
    <property type="match status" value="1"/>
</dbReference>
<dbReference type="HAMAP" id="MF_00378">
    <property type="entry name" value="Exonuc_7_L"/>
    <property type="match status" value="1"/>
</dbReference>
<dbReference type="InterPro" id="IPR003753">
    <property type="entry name" value="Exonuc_VII_L"/>
</dbReference>
<dbReference type="InterPro" id="IPR020579">
    <property type="entry name" value="Exonuc_VII_lsu_C"/>
</dbReference>
<dbReference type="InterPro" id="IPR025824">
    <property type="entry name" value="OB-fold_nuc-bd_dom"/>
</dbReference>
<dbReference type="NCBIfam" id="TIGR00237">
    <property type="entry name" value="xseA"/>
    <property type="match status" value="1"/>
</dbReference>
<dbReference type="PANTHER" id="PTHR30008">
    <property type="entry name" value="EXODEOXYRIBONUCLEASE 7 LARGE SUBUNIT"/>
    <property type="match status" value="1"/>
</dbReference>
<dbReference type="PANTHER" id="PTHR30008:SF0">
    <property type="entry name" value="EXODEOXYRIBONUCLEASE 7 LARGE SUBUNIT"/>
    <property type="match status" value="1"/>
</dbReference>
<dbReference type="Pfam" id="PF02601">
    <property type="entry name" value="Exonuc_VII_L"/>
    <property type="match status" value="1"/>
</dbReference>
<dbReference type="Pfam" id="PF13742">
    <property type="entry name" value="tRNA_anti_2"/>
    <property type="match status" value="1"/>
</dbReference>
<feature type="chain" id="PRO_0000273640" description="Exodeoxyribonuclease 7 large subunit">
    <location>
        <begin position="1"/>
        <end position="452"/>
    </location>
</feature>